<organism>
    <name type="scientific">Fervidobacterium nodosum (strain ATCC 35602 / DSM 5306 / Rt17-B1)</name>
    <dbReference type="NCBI Taxonomy" id="381764"/>
    <lineage>
        <taxon>Bacteria</taxon>
        <taxon>Thermotogati</taxon>
        <taxon>Thermotogota</taxon>
        <taxon>Thermotogae</taxon>
        <taxon>Thermotogales</taxon>
        <taxon>Fervidobacteriaceae</taxon>
        <taxon>Fervidobacterium</taxon>
    </lineage>
</organism>
<keyword id="KW-1185">Reference proteome</keyword>
<keyword id="KW-0687">Ribonucleoprotein</keyword>
<keyword id="KW-0689">Ribosomal protein</keyword>
<keyword id="KW-0694">RNA-binding</keyword>
<keyword id="KW-0699">rRNA-binding</keyword>
<accession>A7HKM5</accession>
<evidence type="ECO:0000255" key="1">
    <source>
        <dbReference type="HAMAP-Rule" id="MF_01334"/>
    </source>
</evidence>
<evidence type="ECO:0000256" key="2">
    <source>
        <dbReference type="SAM" id="MobiDB-lite"/>
    </source>
</evidence>
<evidence type="ECO:0000305" key="3"/>
<gene>
    <name evidence="1" type="primary">rplY</name>
    <name evidence="1" type="synonym">ctc</name>
    <name type="ordered locus">Fnod_0603</name>
</gene>
<name>RL25_FERNB</name>
<feature type="chain" id="PRO_1000086627" description="Large ribosomal subunit protein bL25">
    <location>
        <begin position="1"/>
        <end position="219"/>
    </location>
</feature>
<feature type="region of interest" description="Disordered" evidence="2">
    <location>
        <begin position="195"/>
        <end position="219"/>
    </location>
</feature>
<feature type="compositionally biased region" description="Low complexity" evidence="2">
    <location>
        <begin position="197"/>
        <end position="206"/>
    </location>
</feature>
<feature type="compositionally biased region" description="Basic and acidic residues" evidence="2">
    <location>
        <begin position="207"/>
        <end position="219"/>
    </location>
</feature>
<proteinExistence type="inferred from homology"/>
<protein>
    <recommendedName>
        <fullName evidence="1">Large ribosomal subunit protein bL25</fullName>
    </recommendedName>
    <alternativeName>
        <fullName evidence="3">50S ribosomal protein L25</fullName>
    </alternativeName>
    <alternativeName>
        <fullName evidence="1">General stress protein CTC</fullName>
    </alternativeName>
</protein>
<comment type="function">
    <text evidence="1">This is one of the proteins that binds to the 5S RNA in the ribosome where it forms part of the central protuberance.</text>
</comment>
<comment type="subunit">
    <text evidence="1">Part of the 50S ribosomal subunit; part of the 5S rRNA/L5/L18/L25 subcomplex. Contacts the 5S rRNA. Binds to the 5S rRNA independently of L5 and L18.</text>
</comment>
<comment type="similarity">
    <text evidence="1">Belongs to the bacterial ribosomal protein bL25 family. CTC subfamily.</text>
</comment>
<dbReference type="EMBL" id="CP000771">
    <property type="protein sequence ID" value="ABS60458.1"/>
    <property type="molecule type" value="Genomic_DNA"/>
</dbReference>
<dbReference type="RefSeq" id="WP_011993777.1">
    <property type="nucleotide sequence ID" value="NC_009718.1"/>
</dbReference>
<dbReference type="SMR" id="A7HKM5"/>
<dbReference type="STRING" id="381764.Fnod_0603"/>
<dbReference type="KEGG" id="fno:Fnod_0603"/>
<dbReference type="eggNOG" id="COG1825">
    <property type="taxonomic scope" value="Bacteria"/>
</dbReference>
<dbReference type="HOGENOM" id="CLU_075939_2_1_0"/>
<dbReference type="OrthoDB" id="9790002at2"/>
<dbReference type="Proteomes" id="UP000002415">
    <property type="component" value="Chromosome"/>
</dbReference>
<dbReference type="GO" id="GO:0022625">
    <property type="term" value="C:cytosolic large ribosomal subunit"/>
    <property type="evidence" value="ECO:0007669"/>
    <property type="project" value="TreeGrafter"/>
</dbReference>
<dbReference type="GO" id="GO:0008097">
    <property type="term" value="F:5S rRNA binding"/>
    <property type="evidence" value="ECO:0007669"/>
    <property type="project" value="InterPro"/>
</dbReference>
<dbReference type="GO" id="GO:0003735">
    <property type="term" value="F:structural constituent of ribosome"/>
    <property type="evidence" value="ECO:0007669"/>
    <property type="project" value="InterPro"/>
</dbReference>
<dbReference type="GO" id="GO:0006412">
    <property type="term" value="P:translation"/>
    <property type="evidence" value="ECO:0007669"/>
    <property type="project" value="UniProtKB-UniRule"/>
</dbReference>
<dbReference type="CDD" id="cd00495">
    <property type="entry name" value="Ribosomal_L25_TL5_CTC"/>
    <property type="match status" value="1"/>
</dbReference>
<dbReference type="Gene3D" id="2.170.120.20">
    <property type="entry name" value="Ribosomal protein L25, beta domain"/>
    <property type="match status" value="1"/>
</dbReference>
<dbReference type="Gene3D" id="2.40.240.10">
    <property type="entry name" value="Ribosomal Protein L25, Chain P"/>
    <property type="match status" value="1"/>
</dbReference>
<dbReference type="HAMAP" id="MF_01334">
    <property type="entry name" value="Ribosomal_bL25_CTC"/>
    <property type="match status" value="1"/>
</dbReference>
<dbReference type="InterPro" id="IPR020056">
    <property type="entry name" value="Rbsml_bL25/Gln-tRNA_synth_N"/>
</dbReference>
<dbReference type="InterPro" id="IPR011035">
    <property type="entry name" value="Ribosomal_bL25/Gln-tRNA_synth"/>
</dbReference>
<dbReference type="InterPro" id="IPR020057">
    <property type="entry name" value="Ribosomal_bL25_b-dom"/>
</dbReference>
<dbReference type="InterPro" id="IPR037121">
    <property type="entry name" value="Ribosomal_bL25_C"/>
</dbReference>
<dbReference type="InterPro" id="IPR001021">
    <property type="entry name" value="Ribosomal_bL25_long"/>
</dbReference>
<dbReference type="InterPro" id="IPR029751">
    <property type="entry name" value="Ribosomal_L25_dom"/>
</dbReference>
<dbReference type="InterPro" id="IPR020930">
    <property type="entry name" value="Ribosomal_uL5_bac-type"/>
</dbReference>
<dbReference type="NCBIfam" id="TIGR00731">
    <property type="entry name" value="bL25_bact_ctc"/>
    <property type="match status" value="1"/>
</dbReference>
<dbReference type="PANTHER" id="PTHR33284">
    <property type="entry name" value="RIBOSOMAL PROTEIN L25/GLN-TRNA SYNTHETASE, ANTI-CODON-BINDING DOMAIN-CONTAINING PROTEIN"/>
    <property type="match status" value="1"/>
</dbReference>
<dbReference type="PANTHER" id="PTHR33284:SF1">
    <property type="entry name" value="RIBOSOMAL PROTEIN L25_GLN-TRNA SYNTHETASE, ANTI-CODON-BINDING DOMAIN-CONTAINING PROTEIN"/>
    <property type="match status" value="1"/>
</dbReference>
<dbReference type="Pfam" id="PF01386">
    <property type="entry name" value="Ribosomal_L25p"/>
    <property type="match status" value="1"/>
</dbReference>
<dbReference type="Pfam" id="PF14693">
    <property type="entry name" value="Ribosomal_TL5_C"/>
    <property type="match status" value="1"/>
</dbReference>
<dbReference type="SUPFAM" id="SSF50715">
    <property type="entry name" value="Ribosomal protein L25-like"/>
    <property type="match status" value="1"/>
</dbReference>
<sequence>MEHVVSAQLRSIVGNKRAVRRLRATGAIPAVAYGPGLEKPLSLVLNKTDFLKIFKHITESTPLTLVVKDENDKEVLKHLAFIKMVQYDKVTDEVKHVDFYVPEAHHKMRINVPIEIVGKAIGVEKGGIMEIIHHEVPVKALPDRVPEVIKIDVTNLELGETLRVKDVVLPEGVEIDMDDEDVLITVVVPRGLEVEETTTTETSNEPEVIKKGKKEEEEK</sequence>
<reference key="1">
    <citation type="submission" date="2007-07" db="EMBL/GenBank/DDBJ databases">
        <title>Complete sequence of Fervidobacterium nodosum Rt17-B1.</title>
        <authorList>
            <consortium name="US DOE Joint Genome Institute"/>
            <person name="Copeland A."/>
            <person name="Lucas S."/>
            <person name="Lapidus A."/>
            <person name="Barry K."/>
            <person name="Glavina del Rio T."/>
            <person name="Dalin E."/>
            <person name="Tice H."/>
            <person name="Pitluck S."/>
            <person name="Saunders E."/>
            <person name="Brettin T."/>
            <person name="Bruce D."/>
            <person name="Detter J.C."/>
            <person name="Han C."/>
            <person name="Schmutz J."/>
            <person name="Larimer F."/>
            <person name="Land M."/>
            <person name="Hauser L."/>
            <person name="Kyrpides N."/>
            <person name="Mikhailova N."/>
            <person name="Nelson K."/>
            <person name="Gogarten J.P."/>
            <person name="Noll K."/>
            <person name="Richardson P."/>
        </authorList>
    </citation>
    <scope>NUCLEOTIDE SEQUENCE [LARGE SCALE GENOMIC DNA]</scope>
    <source>
        <strain>ATCC 35602 / DSM 5306 / Rt17-B1</strain>
    </source>
</reference>